<sequence length="283" mass="31018">MAGSNILHKIKLKAGFCGSAPDMGRGKSKMWKNITHGFHCVKGKSSHPMEDYVVSEFKKLEGHELGLFAIFDGHLGHDVAKYLQTNLFDNILKEKDFWTDTENAIRNAYRSTDAVILQQSLKLGKGGSTAVTGILIDGKKLVVANVGDSRAVMSKNGVAHQLSVDHEPSKEKKEIESRGGFVSNIPGDVPRVDGQLAVARAFGDKSLKLHLSSEPDITHQTIDDHTEFILFASDGIWKVLSNQEAVDAIKSIKDPHAAAKHLIEEAISRKSKDDISCIVVKFH</sequence>
<organism>
    <name type="scientific">Arabidopsis thaliana</name>
    <name type="common">Mouse-ear cress</name>
    <dbReference type="NCBI Taxonomy" id="3702"/>
    <lineage>
        <taxon>Eukaryota</taxon>
        <taxon>Viridiplantae</taxon>
        <taxon>Streptophyta</taxon>
        <taxon>Embryophyta</taxon>
        <taxon>Tracheophyta</taxon>
        <taxon>Spermatophyta</taxon>
        <taxon>Magnoliopsida</taxon>
        <taxon>eudicotyledons</taxon>
        <taxon>Gunneridae</taxon>
        <taxon>Pentapetalae</taxon>
        <taxon>rosids</taxon>
        <taxon>malvids</taxon>
        <taxon>Brassicales</taxon>
        <taxon>Brassicaceae</taxon>
        <taxon>Camelineae</taxon>
        <taxon>Arabidopsis</taxon>
    </lineage>
</organism>
<comment type="catalytic activity">
    <reaction>
        <text>O-phospho-L-seryl-[protein] + H2O = L-seryl-[protein] + phosphate</text>
        <dbReference type="Rhea" id="RHEA:20629"/>
        <dbReference type="Rhea" id="RHEA-COMP:9863"/>
        <dbReference type="Rhea" id="RHEA-COMP:11604"/>
        <dbReference type="ChEBI" id="CHEBI:15377"/>
        <dbReference type="ChEBI" id="CHEBI:29999"/>
        <dbReference type="ChEBI" id="CHEBI:43474"/>
        <dbReference type="ChEBI" id="CHEBI:83421"/>
        <dbReference type="EC" id="3.1.3.16"/>
    </reaction>
</comment>
<comment type="catalytic activity">
    <reaction>
        <text>O-phospho-L-threonyl-[protein] + H2O = L-threonyl-[protein] + phosphate</text>
        <dbReference type="Rhea" id="RHEA:47004"/>
        <dbReference type="Rhea" id="RHEA-COMP:11060"/>
        <dbReference type="Rhea" id="RHEA-COMP:11605"/>
        <dbReference type="ChEBI" id="CHEBI:15377"/>
        <dbReference type="ChEBI" id="CHEBI:30013"/>
        <dbReference type="ChEBI" id="CHEBI:43474"/>
        <dbReference type="ChEBI" id="CHEBI:61977"/>
        <dbReference type="EC" id="3.1.3.16"/>
    </reaction>
</comment>
<comment type="cofactor">
    <cofactor evidence="1">
        <name>Mg(2+)</name>
        <dbReference type="ChEBI" id="CHEBI:18420"/>
    </cofactor>
    <cofactor evidence="1">
        <name>Mn(2+)</name>
        <dbReference type="ChEBI" id="CHEBI:29035"/>
    </cofactor>
    <text evidence="1">Binds 2 magnesium or manganese ions per subunit.</text>
</comment>
<comment type="similarity">
    <text evidence="3">Belongs to the PP2C family.</text>
</comment>
<comment type="sequence caution" evidence="3">
    <conflict type="erroneous gene model prediction">
        <sequence resource="EMBL-CDS" id="CAA16879"/>
    </conflict>
</comment>
<comment type="sequence caution" evidence="3">
    <conflict type="erroneous gene model prediction">
        <sequence resource="EMBL-CDS" id="CAB79642"/>
    </conflict>
</comment>
<proteinExistence type="evidence at transcript level"/>
<reference key="1">
    <citation type="journal article" date="1999" name="Nature">
        <title>Sequence and analysis of chromosome 4 of the plant Arabidopsis thaliana.</title>
        <authorList>
            <person name="Mayer K.F.X."/>
            <person name="Schueller C."/>
            <person name="Wambutt R."/>
            <person name="Murphy G."/>
            <person name="Volckaert G."/>
            <person name="Pohl T."/>
            <person name="Duesterhoeft A."/>
            <person name="Stiekema W."/>
            <person name="Entian K.-D."/>
            <person name="Terryn N."/>
            <person name="Harris B."/>
            <person name="Ansorge W."/>
            <person name="Brandt P."/>
            <person name="Grivell L.A."/>
            <person name="Rieger M."/>
            <person name="Weichselgartner M."/>
            <person name="de Simone V."/>
            <person name="Obermaier B."/>
            <person name="Mache R."/>
            <person name="Mueller M."/>
            <person name="Kreis M."/>
            <person name="Delseny M."/>
            <person name="Puigdomenech P."/>
            <person name="Watson M."/>
            <person name="Schmidtheini T."/>
            <person name="Reichert B."/>
            <person name="Portetelle D."/>
            <person name="Perez-Alonso M."/>
            <person name="Boutry M."/>
            <person name="Bancroft I."/>
            <person name="Vos P."/>
            <person name="Hoheisel J."/>
            <person name="Zimmermann W."/>
            <person name="Wedler H."/>
            <person name="Ridley P."/>
            <person name="Langham S.-A."/>
            <person name="McCullagh B."/>
            <person name="Bilham L."/>
            <person name="Robben J."/>
            <person name="van der Schueren J."/>
            <person name="Grymonprez B."/>
            <person name="Chuang Y.-J."/>
            <person name="Vandenbussche F."/>
            <person name="Braeken M."/>
            <person name="Weltjens I."/>
            <person name="Voet M."/>
            <person name="Bastiaens I."/>
            <person name="Aert R."/>
            <person name="Defoor E."/>
            <person name="Weitzenegger T."/>
            <person name="Bothe G."/>
            <person name="Ramsperger U."/>
            <person name="Hilbert H."/>
            <person name="Braun M."/>
            <person name="Holzer E."/>
            <person name="Brandt A."/>
            <person name="Peters S."/>
            <person name="van Staveren M."/>
            <person name="Dirkse W."/>
            <person name="Mooijman P."/>
            <person name="Klein Lankhorst R."/>
            <person name="Rose M."/>
            <person name="Hauf J."/>
            <person name="Koetter P."/>
            <person name="Berneiser S."/>
            <person name="Hempel S."/>
            <person name="Feldpausch M."/>
            <person name="Lamberth S."/>
            <person name="Van den Daele H."/>
            <person name="De Keyser A."/>
            <person name="Buysshaert C."/>
            <person name="Gielen J."/>
            <person name="Villarroel R."/>
            <person name="De Clercq R."/>
            <person name="van Montagu M."/>
            <person name="Rogers J."/>
            <person name="Cronin A."/>
            <person name="Quail M.A."/>
            <person name="Bray-Allen S."/>
            <person name="Clark L."/>
            <person name="Doggett J."/>
            <person name="Hall S."/>
            <person name="Kay M."/>
            <person name="Lennard N."/>
            <person name="McLay K."/>
            <person name="Mayes R."/>
            <person name="Pettett A."/>
            <person name="Rajandream M.A."/>
            <person name="Lyne M."/>
            <person name="Benes V."/>
            <person name="Rechmann S."/>
            <person name="Borkova D."/>
            <person name="Bloecker H."/>
            <person name="Scharfe M."/>
            <person name="Grimm M."/>
            <person name="Loehnert T.-H."/>
            <person name="Dose S."/>
            <person name="de Haan M."/>
            <person name="Maarse A.C."/>
            <person name="Schaefer M."/>
            <person name="Mueller-Auer S."/>
            <person name="Gabel C."/>
            <person name="Fuchs M."/>
            <person name="Fartmann B."/>
            <person name="Granderath K."/>
            <person name="Dauner D."/>
            <person name="Herzl A."/>
            <person name="Neumann S."/>
            <person name="Argiriou A."/>
            <person name="Vitale D."/>
            <person name="Liguori R."/>
            <person name="Piravandi E."/>
            <person name="Massenet O."/>
            <person name="Quigley F."/>
            <person name="Clabauld G."/>
            <person name="Muendlein A."/>
            <person name="Felber R."/>
            <person name="Schnabl S."/>
            <person name="Hiller R."/>
            <person name="Schmidt W."/>
            <person name="Lecharny A."/>
            <person name="Aubourg S."/>
            <person name="Chefdor F."/>
            <person name="Cooke R."/>
            <person name="Berger C."/>
            <person name="Monfort A."/>
            <person name="Casacuberta E."/>
            <person name="Gibbons T."/>
            <person name="Weber N."/>
            <person name="Vandenbol M."/>
            <person name="Bargues M."/>
            <person name="Terol J."/>
            <person name="Torres A."/>
            <person name="Perez-Perez A."/>
            <person name="Purnelle B."/>
            <person name="Bent E."/>
            <person name="Johnson S."/>
            <person name="Tacon D."/>
            <person name="Jesse T."/>
            <person name="Heijnen L."/>
            <person name="Schwarz S."/>
            <person name="Scholler P."/>
            <person name="Heber S."/>
            <person name="Francs P."/>
            <person name="Bielke C."/>
            <person name="Frishman D."/>
            <person name="Haase D."/>
            <person name="Lemcke K."/>
            <person name="Mewes H.-W."/>
            <person name="Stocker S."/>
            <person name="Zaccaria P."/>
            <person name="Bevan M."/>
            <person name="Wilson R.K."/>
            <person name="de la Bastide M."/>
            <person name="Habermann K."/>
            <person name="Parnell L."/>
            <person name="Dedhia N."/>
            <person name="Gnoj L."/>
            <person name="Schutz K."/>
            <person name="Huang E."/>
            <person name="Spiegel L."/>
            <person name="Sekhon M."/>
            <person name="Murray J."/>
            <person name="Sheet P."/>
            <person name="Cordes M."/>
            <person name="Abu-Threideh J."/>
            <person name="Stoneking T."/>
            <person name="Kalicki J."/>
            <person name="Graves T."/>
            <person name="Harmon G."/>
            <person name="Edwards J."/>
            <person name="Latreille P."/>
            <person name="Courtney L."/>
            <person name="Cloud J."/>
            <person name="Abbott A."/>
            <person name="Scott K."/>
            <person name="Johnson D."/>
            <person name="Minx P."/>
            <person name="Bentley D."/>
            <person name="Fulton B."/>
            <person name="Miller N."/>
            <person name="Greco T."/>
            <person name="Kemp K."/>
            <person name="Kramer J."/>
            <person name="Fulton L."/>
            <person name="Mardis E."/>
            <person name="Dante M."/>
            <person name="Pepin K."/>
            <person name="Hillier L.W."/>
            <person name="Nelson J."/>
            <person name="Spieth J."/>
            <person name="Ryan E."/>
            <person name="Andrews S."/>
            <person name="Geisel C."/>
            <person name="Layman D."/>
            <person name="Du H."/>
            <person name="Ali J."/>
            <person name="Berghoff A."/>
            <person name="Jones K."/>
            <person name="Drone K."/>
            <person name="Cotton M."/>
            <person name="Joshu C."/>
            <person name="Antonoiu B."/>
            <person name="Zidanic M."/>
            <person name="Strong C."/>
            <person name="Sun H."/>
            <person name="Lamar B."/>
            <person name="Yordan C."/>
            <person name="Ma P."/>
            <person name="Zhong J."/>
            <person name="Preston R."/>
            <person name="Vil D."/>
            <person name="Shekher M."/>
            <person name="Matero A."/>
            <person name="Shah R."/>
            <person name="Swaby I.K."/>
            <person name="O'Shaughnessy A."/>
            <person name="Rodriguez M."/>
            <person name="Hoffman J."/>
            <person name="Till S."/>
            <person name="Granat S."/>
            <person name="Shohdy N."/>
            <person name="Hasegawa A."/>
            <person name="Hameed A."/>
            <person name="Lodhi M."/>
            <person name="Johnson A."/>
            <person name="Chen E."/>
            <person name="Marra M.A."/>
            <person name="Martienssen R."/>
            <person name="McCombie W.R."/>
        </authorList>
    </citation>
    <scope>NUCLEOTIDE SEQUENCE [LARGE SCALE GENOMIC DNA]</scope>
    <source>
        <strain>cv. Columbia</strain>
    </source>
</reference>
<reference key="2">
    <citation type="journal article" date="2017" name="Plant J.">
        <title>Araport11: a complete reannotation of the Arabidopsis thaliana reference genome.</title>
        <authorList>
            <person name="Cheng C.Y."/>
            <person name="Krishnakumar V."/>
            <person name="Chan A.P."/>
            <person name="Thibaud-Nissen F."/>
            <person name="Schobel S."/>
            <person name="Town C.D."/>
        </authorList>
    </citation>
    <scope>GENOME REANNOTATION</scope>
    <source>
        <strain>cv. Columbia</strain>
    </source>
</reference>
<reference key="3">
    <citation type="journal article" date="2003" name="Science">
        <title>Empirical analysis of transcriptional activity in the Arabidopsis genome.</title>
        <authorList>
            <person name="Yamada K."/>
            <person name="Lim J."/>
            <person name="Dale J.M."/>
            <person name="Chen H."/>
            <person name="Shinn P."/>
            <person name="Palm C.J."/>
            <person name="Southwick A.M."/>
            <person name="Wu H.C."/>
            <person name="Kim C.J."/>
            <person name="Nguyen M."/>
            <person name="Pham P.K."/>
            <person name="Cheuk R.F."/>
            <person name="Karlin-Newmann G."/>
            <person name="Liu S.X."/>
            <person name="Lam B."/>
            <person name="Sakano H."/>
            <person name="Wu T."/>
            <person name="Yu G."/>
            <person name="Miranda M."/>
            <person name="Quach H.L."/>
            <person name="Tripp M."/>
            <person name="Chang C.H."/>
            <person name="Lee J.M."/>
            <person name="Toriumi M.J."/>
            <person name="Chan M.M."/>
            <person name="Tang C.C."/>
            <person name="Onodera C.S."/>
            <person name="Deng J.M."/>
            <person name="Akiyama K."/>
            <person name="Ansari Y."/>
            <person name="Arakawa T."/>
            <person name="Banh J."/>
            <person name="Banno F."/>
            <person name="Bowser L."/>
            <person name="Brooks S.Y."/>
            <person name="Carninci P."/>
            <person name="Chao Q."/>
            <person name="Choy N."/>
            <person name="Enju A."/>
            <person name="Goldsmith A.D."/>
            <person name="Gurjal M."/>
            <person name="Hansen N.F."/>
            <person name="Hayashizaki Y."/>
            <person name="Johnson-Hopson C."/>
            <person name="Hsuan V.W."/>
            <person name="Iida K."/>
            <person name="Karnes M."/>
            <person name="Khan S."/>
            <person name="Koesema E."/>
            <person name="Ishida J."/>
            <person name="Jiang P.X."/>
            <person name="Jones T."/>
            <person name="Kawai J."/>
            <person name="Kamiya A."/>
            <person name="Meyers C."/>
            <person name="Nakajima M."/>
            <person name="Narusaka M."/>
            <person name="Seki M."/>
            <person name="Sakurai T."/>
            <person name="Satou M."/>
            <person name="Tamse R."/>
            <person name="Vaysberg M."/>
            <person name="Wallender E.K."/>
            <person name="Wong C."/>
            <person name="Yamamura Y."/>
            <person name="Yuan S."/>
            <person name="Shinozaki K."/>
            <person name="Davis R.W."/>
            <person name="Theologis A."/>
            <person name="Ecker J.R."/>
        </authorList>
    </citation>
    <scope>NUCLEOTIDE SEQUENCE [LARGE SCALE MRNA]</scope>
    <source>
        <strain>cv. Columbia</strain>
    </source>
</reference>
<reference key="4">
    <citation type="journal article" date="2008" name="BMC Genomics">
        <title>Genome-wide and expression analysis of protein phosphatase 2C in rice and Arabidopsis.</title>
        <authorList>
            <person name="Xue T."/>
            <person name="Wang D."/>
            <person name="Zhang S."/>
            <person name="Ehlting J."/>
            <person name="Ni F."/>
            <person name="Jacab S."/>
            <person name="Zheng C."/>
            <person name="Zhong Y."/>
        </authorList>
    </citation>
    <scope>GENE FAMILY</scope>
    <scope>NOMENCLATURE</scope>
</reference>
<dbReference type="EC" id="3.1.3.16"/>
<dbReference type="EMBL" id="AL021749">
    <property type="protein sequence ID" value="CAA16879.1"/>
    <property type="status" value="ALT_SEQ"/>
    <property type="molecule type" value="Genomic_DNA"/>
</dbReference>
<dbReference type="EMBL" id="AL161572">
    <property type="protein sequence ID" value="CAB79642.1"/>
    <property type="status" value="ALT_SEQ"/>
    <property type="molecule type" value="Genomic_DNA"/>
</dbReference>
<dbReference type="EMBL" id="CP002687">
    <property type="protein sequence ID" value="AEE85481.1"/>
    <property type="molecule type" value="Genomic_DNA"/>
</dbReference>
<dbReference type="EMBL" id="AY059737">
    <property type="protein sequence ID" value="AAL24149.1"/>
    <property type="molecule type" value="mRNA"/>
</dbReference>
<dbReference type="EMBL" id="AY091272">
    <property type="protein sequence ID" value="AAM14211.1"/>
    <property type="molecule type" value="mRNA"/>
</dbReference>
<dbReference type="PIR" id="T04610">
    <property type="entry name" value="T04610"/>
</dbReference>
<dbReference type="RefSeq" id="NP_567808.1">
    <property type="nucleotide sequence ID" value="NM_118982.4"/>
</dbReference>
<dbReference type="SMR" id="Q93YW5"/>
<dbReference type="BioGRID" id="14244">
    <property type="interactions" value="2"/>
</dbReference>
<dbReference type="FunCoup" id="Q93YW5">
    <property type="interactions" value="117"/>
</dbReference>
<dbReference type="IntAct" id="Q93YW5">
    <property type="interactions" value="1"/>
</dbReference>
<dbReference type="MINT" id="Q93YW5"/>
<dbReference type="STRING" id="3702.Q93YW5"/>
<dbReference type="iPTMnet" id="Q93YW5"/>
<dbReference type="PaxDb" id="3702-AT4G28400.1"/>
<dbReference type="ProteomicsDB" id="248805"/>
<dbReference type="EnsemblPlants" id="AT4G28400.1">
    <property type="protein sequence ID" value="AT4G28400.1"/>
    <property type="gene ID" value="AT4G28400"/>
</dbReference>
<dbReference type="GeneID" id="828957"/>
<dbReference type="Gramene" id="AT4G28400.1">
    <property type="protein sequence ID" value="AT4G28400.1"/>
    <property type="gene ID" value="AT4G28400"/>
</dbReference>
<dbReference type="KEGG" id="ath:AT4G28400"/>
<dbReference type="Araport" id="AT4G28400"/>
<dbReference type="TAIR" id="AT4G28400"/>
<dbReference type="eggNOG" id="KOG0698">
    <property type="taxonomic scope" value="Eukaryota"/>
</dbReference>
<dbReference type="HOGENOM" id="CLU_013173_0_1_1"/>
<dbReference type="InParanoid" id="Q93YW5"/>
<dbReference type="OrthoDB" id="10264738at2759"/>
<dbReference type="PhylomeDB" id="Q93YW5"/>
<dbReference type="CD-CODE" id="4299E36E">
    <property type="entry name" value="Nucleolus"/>
</dbReference>
<dbReference type="PRO" id="PR:Q93YW5"/>
<dbReference type="Proteomes" id="UP000006548">
    <property type="component" value="Chromosome 4"/>
</dbReference>
<dbReference type="ExpressionAtlas" id="Q93YW5">
    <property type="expression patterns" value="baseline and differential"/>
</dbReference>
<dbReference type="GO" id="GO:0005886">
    <property type="term" value="C:plasma membrane"/>
    <property type="evidence" value="ECO:0007005"/>
    <property type="project" value="TAIR"/>
</dbReference>
<dbReference type="GO" id="GO:0046872">
    <property type="term" value="F:metal ion binding"/>
    <property type="evidence" value="ECO:0007669"/>
    <property type="project" value="UniProtKB-KW"/>
</dbReference>
<dbReference type="GO" id="GO:0004722">
    <property type="term" value="F:protein serine/threonine phosphatase activity"/>
    <property type="evidence" value="ECO:0007669"/>
    <property type="project" value="UniProtKB-EC"/>
</dbReference>
<dbReference type="CDD" id="cd00143">
    <property type="entry name" value="PP2Cc"/>
    <property type="match status" value="1"/>
</dbReference>
<dbReference type="FunFam" id="3.60.40.10:FF:000010">
    <property type="entry name" value="Probable protein phosphatase 2C 39"/>
    <property type="match status" value="1"/>
</dbReference>
<dbReference type="Gene3D" id="3.60.40.10">
    <property type="entry name" value="PPM-type phosphatase domain"/>
    <property type="match status" value="1"/>
</dbReference>
<dbReference type="InterPro" id="IPR015655">
    <property type="entry name" value="PP2C"/>
</dbReference>
<dbReference type="InterPro" id="IPR036457">
    <property type="entry name" value="PPM-type-like_dom_sf"/>
</dbReference>
<dbReference type="InterPro" id="IPR001932">
    <property type="entry name" value="PPM-type_phosphatase-like_dom"/>
</dbReference>
<dbReference type="PANTHER" id="PTHR47992">
    <property type="entry name" value="PROTEIN PHOSPHATASE"/>
    <property type="match status" value="1"/>
</dbReference>
<dbReference type="Pfam" id="PF00481">
    <property type="entry name" value="PP2C"/>
    <property type="match status" value="1"/>
</dbReference>
<dbReference type="SMART" id="SM00332">
    <property type="entry name" value="PP2Cc"/>
    <property type="match status" value="1"/>
</dbReference>
<dbReference type="SUPFAM" id="SSF81606">
    <property type="entry name" value="PP2C-like"/>
    <property type="match status" value="1"/>
</dbReference>
<dbReference type="PROSITE" id="PS51746">
    <property type="entry name" value="PPM_2"/>
    <property type="match status" value="1"/>
</dbReference>
<feature type="chain" id="PRO_0000367980" description="Probable protein phosphatase 2C 58">
    <location>
        <begin position="1"/>
        <end position="283"/>
    </location>
</feature>
<feature type="domain" description="PPM-type phosphatase" evidence="2">
    <location>
        <begin position="35"/>
        <end position="282"/>
    </location>
</feature>
<feature type="binding site" evidence="1">
    <location>
        <position position="72"/>
    </location>
    <ligand>
        <name>Mn(2+)</name>
        <dbReference type="ChEBI" id="CHEBI:29035"/>
        <label>1</label>
    </ligand>
</feature>
<feature type="binding site" evidence="1">
    <location>
        <position position="72"/>
    </location>
    <ligand>
        <name>Mn(2+)</name>
        <dbReference type="ChEBI" id="CHEBI:29035"/>
        <label>2</label>
    </ligand>
</feature>
<feature type="binding site" evidence="1">
    <location>
        <position position="73"/>
    </location>
    <ligand>
        <name>Mn(2+)</name>
        <dbReference type="ChEBI" id="CHEBI:29035"/>
        <label>1</label>
    </ligand>
</feature>
<feature type="binding site" evidence="1">
    <location>
        <position position="234"/>
    </location>
    <ligand>
        <name>Mn(2+)</name>
        <dbReference type="ChEBI" id="CHEBI:29035"/>
        <label>2</label>
    </ligand>
</feature>
<feature type="binding site" evidence="1">
    <location>
        <position position="273"/>
    </location>
    <ligand>
        <name>Mn(2+)</name>
        <dbReference type="ChEBI" id="CHEBI:29035"/>
        <label>2</label>
    </ligand>
</feature>
<keyword id="KW-0378">Hydrolase</keyword>
<keyword id="KW-0460">Magnesium</keyword>
<keyword id="KW-0464">Manganese</keyword>
<keyword id="KW-0479">Metal-binding</keyword>
<keyword id="KW-0904">Protein phosphatase</keyword>
<keyword id="KW-1185">Reference proteome</keyword>
<gene>
    <name type="ordered locus">At4g28400</name>
    <name type="ORF">F20O9.80</name>
</gene>
<protein>
    <recommendedName>
        <fullName>Probable protein phosphatase 2C 58</fullName>
        <shortName>AtPP2C58</shortName>
        <ecNumber>3.1.3.16</ecNumber>
    </recommendedName>
</protein>
<accession>Q93YW5</accession>
<accession>O49449</accession>
<evidence type="ECO:0000250" key="1"/>
<evidence type="ECO:0000255" key="2">
    <source>
        <dbReference type="PROSITE-ProRule" id="PRU01082"/>
    </source>
</evidence>
<evidence type="ECO:0000305" key="3"/>
<name>P2C58_ARATH</name>